<sequence>MTTAPSGLPGTPLPPARRRERPRWPLLVAGAAVLGLIGYMVLGNANSNLVYYVLPSEYQQDTAKFAGKTLRMGGLAKDVVYNRDTLALKFNMTDGQVAYPVQYQGAVPDMFRNDAVVVMEGQMQQGVFHGKSLLVKHSEEYKAADSKGEGQYSQDDLKKILNDQSTKP</sequence>
<organism>
    <name type="scientific">Deinococcus radiodurans (strain ATCC 13939 / DSM 20539 / JCM 16871 / CCUG 27074 / LMG 4051 / NBRC 15346 / NCIMB 9279 / VKM B-1422 / R1)</name>
    <dbReference type="NCBI Taxonomy" id="243230"/>
    <lineage>
        <taxon>Bacteria</taxon>
        <taxon>Thermotogati</taxon>
        <taxon>Deinococcota</taxon>
        <taxon>Deinococci</taxon>
        <taxon>Deinococcales</taxon>
        <taxon>Deinococcaceae</taxon>
        <taxon>Deinococcus</taxon>
    </lineage>
</organism>
<dbReference type="EMBL" id="AE000513">
    <property type="protein sequence ID" value="AAF09929.1"/>
    <property type="molecule type" value="Genomic_DNA"/>
</dbReference>
<dbReference type="PIR" id="H75529">
    <property type="entry name" value="H75529"/>
</dbReference>
<dbReference type="RefSeq" id="NP_294070.1">
    <property type="nucleotide sequence ID" value="NC_001263.1"/>
</dbReference>
<dbReference type="RefSeq" id="WP_010886992.1">
    <property type="nucleotide sequence ID" value="NC_001263.1"/>
</dbReference>
<dbReference type="SMR" id="Q9RXG6"/>
<dbReference type="STRING" id="243230.DR_0347"/>
<dbReference type="PaxDb" id="243230-DR_0347"/>
<dbReference type="EnsemblBacteria" id="AAF09929">
    <property type="protein sequence ID" value="AAF09929"/>
    <property type="gene ID" value="DR_0347"/>
</dbReference>
<dbReference type="GeneID" id="69516580"/>
<dbReference type="KEGG" id="dra:DR_0347"/>
<dbReference type="PATRIC" id="fig|243230.17.peg.516"/>
<dbReference type="eggNOG" id="COG2332">
    <property type="taxonomic scope" value="Bacteria"/>
</dbReference>
<dbReference type="HOGENOM" id="CLU_079503_2_0_0"/>
<dbReference type="InParanoid" id="Q9RXG6"/>
<dbReference type="OrthoDB" id="9793584at2"/>
<dbReference type="Proteomes" id="UP000002524">
    <property type="component" value="Chromosome 1"/>
</dbReference>
<dbReference type="GO" id="GO:0005886">
    <property type="term" value="C:plasma membrane"/>
    <property type="evidence" value="ECO:0007669"/>
    <property type="project" value="UniProtKB-SubCell"/>
</dbReference>
<dbReference type="GO" id="GO:0020037">
    <property type="term" value="F:heme binding"/>
    <property type="evidence" value="ECO:0007669"/>
    <property type="project" value="InterPro"/>
</dbReference>
<dbReference type="GO" id="GO:0046872">
    <property type="term" value="F:metal ion binding"/>
    <property type="evidence" value="ECO:0007669"/>
    <property type="project" value="UniProtKB-KW"/>
</dbReference>
<dbReference type="GO" id="GO:0017004">
    <property type="term" value="P:cytochrome complex assembly"/>
    <property type="evidence" value="ECO:0007669"/>
    <property type="project" value="UniProtKB-KW"/>
</dbReference>
<dbReference type="Gene3D" id="2.40.50.140">
    <property type="entry name" value="Nucleic acid-binding proteins"/>
    <property type="match status" value="1"/>
</dbReference>
<dbReference type="HAMAP" id="MF_01959">
    <property type="entry name" value="CcmE"/>
    <property type="match status" value="1"/>
</dbReference>
<dbReference type="InterPro" id="IPR004329">
    <property type="entry name" value="CcmE"/>
</dbReference>
<dbReference type="InterPro" id="IPR036127">
    <property type="entry name" value="CcmE-like_sf"/>
</dbReference>
<dbReference type="InterPro" id="IPR012340">
    <property type="entry name" value="NA-bd_OB-fold"/>
</dbReference>
<dbReference type="NCBIfam" id="NF009727">
    <property type="entry name" value="PRK13254.1-1"/>
    <property type="match status" value="1"/>
</dbReference>
<dbReference type="PANTHER" id="PTHR34128">
    <property type="entry name" value="CYTOCHROME C-TYPE BIOGENESIS PROTEIN CCME HOMOLOG, MITOCHONDRIAL"/>
    <property type="match status" value="1"/>
</dbReference>
<dbReference type="PANTHER" id="PTHR34128:SF2">
    <property type="entry name" value="CYTOCHROME C-TYPE BIOGENESIS PROTEIN CCME HOMOLOG, MITOCHONDRIAL"/>
    <property type="match status" value="1"/>
</dbReference>
<dbReference type="Pfam" id="PF03100">
    <property type="entry name" value="CcmE"/>
    <property type="match status" value="1"/>
</dbReference>
<dbReference type="SUPFAM" id="SSF82093">
    <property type="entry name" value="Heme chaperone CcmE"/>
    <property type="match status" value="1"/>
</dbReference>
<gene>
    <name evidence="1" type="primary">ccmE</name>
    <name evidence="1" type="synonym">cycJ</name>
    <name type="ordered locus">DR_0347</name>
</gene>
<keyword id="KW-1003">Cell membrane</keyword>
<keyword id="KW-0201">Cytochrome c-type biogenesis</keyword>
<keyword id="KW-0349">Heme</keyword>
<keyword id="KW-0408">Iron</keyword>
<keyword id="KW-0472">Membrane</keyword>
<keyword id="KW-0479">Metal-binding</keyword>
<keyword id="KW-1185">Reference proteome</keyword>
<keyword id="KW-0735">Signal-anchor</keyword>
<keyword id="KW-0812">Transmembrane</keyword>
<keyword id="KW-1133">Transmembrane helix</keyword>
<accession>Q9RXG6</accession>
<feature type="chain" id="PRO_0000238805" description="Cytochrome c-type biogenesis protein CcmE">
    <location>
        <begin position="1"/>
        <end position="168"/>
    </location>
</feature>
<feature type="topological domain" description="Cytoplasmic" evidence="1">
    <location>
        <begin position="1"/>
        <end position="23"/>
    </location>
</feature>
<feature type="transmembrane region" description="Helical; Signal-anchor for type II membrane protein" evidence="1">
    <location>
        <begin position="24"/>
        <end position="44"/>
    </location>
</feature>
<feature type="topological domain" description="Extracellular" evidence="1">
    <location>
        <begin position="45"/>
        <end position="168"/>
    </location>
</feature>
<feature type="region of interest" description="Disordered" evidence="2">
    <location>
        <begin position="145"/>
        <end position="168"/>
    </location>
</feature>
<feature type="binding site" description="covalent" evidence="1">
    <location>
        <position position="137"/>
    </location>
    <ligand>
        <name>heme</name>
        <dbReference type="ChEBI" id="CHEBI:30413"/>
    </ligand>
</feature>
<feature type="binding site" description="axial binding residue" evidence="1">
    <location>
        <position position="141"/>
    </location>
    <ligand>
        <name>heme</name>
        <dbReference type="ChEBI" id="CHEBI:30413"/>
    </ligand>
    <ligandPart>
        <name>Fe</name>
        <dbReference type="ChEBI" id="CHEBI:18248"/>
    </ligandPart>
</feature>
<reference key="1">
    <citation type="journal article" date="1999" name="Science">
        <title>Genome sequence of the radioresistant bacterium Deinococcus radiodurans R1.</title>
        <authorList>
            <person name="White O."/>
            <person name="Eisen J.A."/>
            <person name="Heidelberg J.F."/>
            <person name="Hickey E.K."/>
            <person name="Peterson J.D."/>
            <person name="Dodson R.J."/>
            <person name="Haft D.H."/>
            <person name="Gwinn M.L."/>
            <person name="Nelson W.C."/>
            <person name="Richardson D.L."/>
            <person name="Moffat K.S."/>
            <person name="Qin H."/>
            <person name="Jiang L."/>
            <person name="Pamphile W."/>
            <person name="Crosby M."/>
            <person name="Shen M."/>
            <person name="Vamathevan J.J."/>
            <person name="Lam P."/>
            <person name="McDonald L.A."/>
            <person name="Utterback T.R."/>
            <person name="Zalewski C."/>
            <person name="Makarova K.S."/>
            <person name="Aravind L."/>
            <person name="Daly M.J."/>
            <person name="Minton K.W."/>
            <person name="Fleischmann R.D."/>
            <person name="Ketchum K.A."/>
            <person name="Nelson K.E."/>
            <person name="Salzberg S.L."/>
            <person name="Smith H.O."/>
            <person name="Venter J.C."/>
            <person name="Fraser C.M."/>
        </authorList>
    </citation>
    <scope>NUCLEOTIDE SEQUENCE [LARGE SCALE GENOMIC DNA]</scope>
    <source>
        <strain>ATCC 13939 / DSM 20539 / JCM 16871 / CCUG 27074 / LMG 4051 / NBRC 15346 / NCIMB 9279 / VKM B-1422 / R1</strain>
    </source>
</reference>
<comment type="function">
    <text evidence="1">Heme chaperone required for the biogenesis of c-type cytochromes. Transiently binds heme delivered by CcmC and transfers the heme to apo-cytochromes in a process facilitated by CcmF and CcmH.</text>
</comment>
<comment type="subcellular location">
    <subcellularLocation>
        <location evidence="1">Cell membrane</location>
        <topology evidence="1">Single-pass type II membrane protein</topology>
    </subcellularLocation>
</comment>
<comment type="similarity">
    <text evidence="1">Belongs to the CcmE/CycJ family.</text>
</comment>
<protein>
    <recommendedName>
        <fullName evidence="1">Cytochrome c-type biogenesis protein CcmE</fullName>
    </recommendedName>
    <alternativeName>
        <fullName evidence="1">Cytochrome c maturation protein E</fullName>
    </alternativeName>
    <alternativeName>
        <fullName evidence="1">Heme chaperone CcmE</fullName>
    </alternativeName>
</protein>
<proteinExistence type="inferred from homology"/>
<name>CCME_DEIRA</name>
<evidence type="ECO:0000255" key="1">
    <source>
        <dbReference type="HAMAP-Rule" id="MF_01959"/>
    </source>
</evidence>
<evidence type="ECO:0000256" key="2">
    <source>
        <dbReference type="SAM" id="MobiDB-lite"/>
    </source>
</evidence>